<organism>
    <name type="scientific">Synechococcus elongatus (strain ATCC 33912 / PCC 7942 / FACHB-805)</name>
    <name type="common">Anacystis nidulans R2</name>
    <dbReference type="NCBI Taxonomy" id="1140"/>
    <lineage>
        <taxon>Bacteria</taxon>
        <taxon>Bacillati</taxon>
        <taxon>Cyanobacteriota</taxon>
        <taxon>Cyanophyceae</taxon>
        <taxon>Synechococcales</taxon>
        <taxon>Synechococcaceae</taxon>
        <taxon>Synechococcus</taxon>
    </lineage>
</organism>
<gene>
    <name evidence="4" type="primary">ldpA</name>
    <name evidence="8" type="ordered locus">Synpcc7942_0624</name>
</gene>
<keyword id="KW-0004">4Fe-4S</keyword>
<keyword id="KW-0090">Biological rhythms</keyword>
<keyword id="KW-0408">Iron</keyword>
<keyword id="KW-0411">Iron-sulfur</keyword>
<keyword id="KW-0479">Metal-binding</keyword>
<keyword id="KW-1185">Reference proteome</keyword>
<accession>Q8GLI4</accession>
<evidence type="ECO:0000255" key="1">
    <source>
        <dbReference type="PROSITE-ProRule" id="PRU00711"/>
    </source>
</evidence>
<evidence type="ECO:0000269" key="2">
    <source>
    </source>
</evidence>
<evidence type="ECO:0000269" key="3">
    <source>
    </source>
</evidence>
<evidence type="ECO:0000303" key="4">
    <source>
    </source>
</evidence>
<evidence type="ECO:0000305" key="5">
    <source>
    </source>
</evidence>
<evidence type="ECO:0000305" key="6">
    <source>
    </source>
</evidence>
<evidence type="ECO:0000312" key="7">
    <source>
        <dbReference type="EMBL" id="AAN06910.1"/>
    </source>
</evidence>
<evidence type="ECO:0000312" key="8">
    <source>
        <dbReference type="EMBL" id="ABB56656.1"/>
    </source>
</evidence>
<feature type="chain" id="PRO_0000457281" description="Light dependent period A">
    <location>
        <begin position="1"/>
        <end position="352"/>
    </location>
</feature>
<feature type="domain" description="4Fe-4S ferredoxin-type 1" evidence="1">
    <location>
        <begin position="88"/>
        <end position="119"/>
    </location>
</feature>
<feature type="domain" description="4Fe-4S ferredoxin-type 2" evidence="1">
    <location>
        <begin position="121"/>
        <end position="144"/>
    </location>
</feature>
<feature type="binding site" evidence="1 5 6">
    <location>
        <position position="97"/>
    </location>
    <ligand>
        <name>[4Fe-4S] cluster</name>
        <dbReference type="ChEBI" id="CHEBI:49883"/>
        <label>1</label>
    </ligand>
</feature>
<feature type="binding site" evidence="1 5 6">
    <location>
        <position position="101"/>
    </location>
    <ligand>
        <name>[4Fe-4S] cluster</name>
        <dbReference type="ChEBI" id="CHEBI:49883"/>
        <label>1</label>
    </ligand>
</feature>
<feature type="binding site" evidence="1 5 6">
    <location>
        <position position="105"/>
    </location>
    <ligand>
        <name>[4Fe-4S] cluster</name>
        <dbReference type="ChEBI" id="CHEBI:49883"/>
        <label>1</label>
    </ligand>
</feature>
<feature type="binding site" evidence="1 5 6">
    <location>
        <position position="109"/>
    </location>
    <ligand>
        <name>[4Fe-4S] cluster</name>
        <dbReference type="ChEBI" id="CHEBI:49883"/>
        <label>1</label>
    </ligand>
</feature>
<feature type="binding site" evidence="1 5 6">
    <location>
        <position position="124"/>
    </location>
    <ligand>
        <name>[4Fe-4S] cluster</name>
        <dbReference type="ChEBI" id="CHEBI:49883"/>
        <label>2</label>
    </ligand>
</feature>
<feature type="binding site" evidence="1 5 6">
    <location>
        <position position="127"/>
    </location>
    <ligand>
        <name>[4Fe-4S] cluster</name>
        <dbReference type="ChEBI" id="CHEBI:49883"/>
        <label>2</label>
    </ligand>
</feature>
<feature type="binding site" evidence="1 5 6">
    <location>
        <position position="130"/>
    </location>
    <ligand>
        <name>[4Fe-4S] cluster</name>
        <dbReference type="ChEBI" id="CHEBI:49883"/>
        <label>2</label>
    </ligand>
</feature>
<feature type="binding site" evidence="1 5 6">
    <location>
        <position position="134"/>
    </location>
    <ligand>
        <name>[4Fe-4S] cluster</name>
        <dbReference type="ChEBI" id="CHEBI:49883"/>
        <label>2</label>
    </ligand>
</feature>
<name>LDPA_SYNE7</name>
<protein>
    <recommendedName>
        <fullName evidence="4">Light dependent period A</fullName>
        <shortName evidence="4">LdpA</shortName>
    </recommendedName>
</protein>
<sequence length="352" mass="37866">MSASFPLEALQAGHWFKLICGASYQHLPVIRNLALTYALAGADCVDVAAEPAVVRSALAGLAAYERLTGRDRPWLMVSLNDGEDLHFRRAWFDPDRCPTDCPRPCERVCPTDAITSTGVQRDRCYGCGRCLPICPLGLIEAQAWQVDAAALLPELLDLGINAIEIHTQVGHQKEFQQLWQQLQPWLPQLQAIAISCPAHPEAIAYLWDLQELVGNTVETVIWQTDGRPMSGDIGAGTTHAAVRFAQAMLTEGPPGHVQLAGGTNAHTVAKLQELKLLAPQVSRFVAGIACGGAARTPLAELLEPLAEQQRSLEAHPEVLQAAVTTAIALVGPLKQAVGGATRSIPAFLLRTP</sequence>
<dbReference type="EMBL" id="AY136759">
    <property type="protein sequence ID" value="AAN06910.1"/>
    <property type="molecule type" value="Genomic_DNA"/>
</dbReference>
<dbReference type="EMBL" id="CP000100">
    <property type="protein sequence ID" value="ABB56656.1"/>
    <property type="molecule type" value="Genomic_DNA"/>
</dbReference>
<dbReference type="RefSeq" id="WP_011377652.1">
    <property type="nucleotide sequence ID" value="NZ_JACJTX010000006.1"/>
</dbReference>
<dbReference type="IntAct" id="Q8GLI4">
    <property type="interactions" value="3"/>
</dbReference>
<dbReference type="STRING" id="1140.Synpcc7942_0624"/>
<dbReference type="PaxDb" id="1140-Synpcc7942_0624"/>
<dbReference type="PRIDE" id="Q8GLI4"/>
<dbReference type="KEGG" id="syf:Synpcc7942_0624"/>
<dbReference type="eggNOG" id="COG1149">
    <property type="taxonomic scope" value="Bacteria"/>
</dbReference>
<dbReference type="HOGENOM" id="CLU_037469_0_0_3"/>
<dbReference type="OrthoDB" id="9789030at2"/>
<dbReference type="BioCyc" id="SYNEL:SYNPCC7942_0624-MONOMER"/>
<dbReference type="Proteomes" id="UP000889800">
    <property type="component" value="Chromosome"/>
</dbReference>
<dbReference type="GO" id="GO:0051539">
    <property type="term" value="F:4 iron, 4 sulfur cluster binding"/>
    <property type="evidence" value="ECO:0000314"/>
    <property type="project" value="UniProtKB"/>
</dbReference>
<dbReference type="GO" id="GO:0046872">
    <property type="term" value="F:metal ion binding"/>
    <property type="evidence" value="ECO:0007669"/>
    <property type="project" value="UniProtKB-KW"/>
</dbReference>
<dbReference type="GO" id="GO:0007623">
    <property type="term" value="P:circadian rhythm"/>
    <property type="evidence" value="ECO:0000315"/>
    <property type="project" value="UniProtKB"/>
</dbReference>
<dbReference type="GO" id="GO:0051776">
    <property type="term" value="P:detection of redox state"/>
    <property type="evidence" value="ECO:0000314"/>
    <property type="project" value="UniProtKB"/>
</dbReference>
<dbReference type="Gene3D" id="3.30.70.20">
    <property type="match status" value="1"/>
</dbReference>
<dbReference type="InterPro" id="IPR017896">
    <property type="entry name" value="4Fe4S_Fe-S-bd"/>
</dbReference>
<dbReference type="InterPro" id="IPR017900">
    <property type="entry name" value="4Fe4S_Fe_S_CS"/>
</dbReference>
<dbReference type="InterPro" id="IPR021039">
    <property type="entry name" value="Fe-S-bd_prot_LdpA_C"/>
</dbReference>
<dbReference type="InterPro" id="IPR050157">
    <property type="entry name" value="PSI_iron-sulfur_center"/>
</dbReference>
<dbReference type="NCBIfam" id="NF045992">
    <property type="entry name" value="CircClkLdpA"/>
    <property type="match status" value="1"/>
</dbReference>
<dbReference type="PANTHER" id="PTHR24960:SF79">
    <property type="entry name" value="PHOTOSYSTEM I IRON-SULFUR CENTER"/>
    <property type="match status" value="1"/>
</dbReference>
<dbReference type="PANTHER" id="PTHR24960">
    <property type="entry name" value="PHOTOSYSTEM I IRON-SULFUR CENTER-RELATED"/>
    <property type="match status" value="1"/>
</dbReference>
<dbReference type="Pfam" id="PF12617">
    <property type="entry name" value="LdpA_C"/>
    <property type="match status" value="1"/>
</dbReference>
<dbReference type="Pfam" id="PF25160">
    <property type="entry name" value="LdpA_Fe-S-bd"/>
    <property type="match status" value="1"/>
</dbReference>
<dbReference type="SUPFAM" id="SSF54862">
    <property type="entry name" value="4Fe-4S ferredoxins"/>
    <property type="match status" value="1"/>
</dbReference>
<dbReference type="PROSITE" id="PS00198">
    <property type="entry name" value="4FE4S_FER_1"/>
    <property type="match status" value="1"/>
</dbReference>
<dbReference type="PROSITE" id="PS51379">
    <property type="entry name" value="4FE4S_FER_2"/>
    <property type="match status" value="2"/>
</dbReference>
<comment type="function">
    <text evidence="2 3 5 6">Functions in an input pathway to the Kai circadian clock (PubMed:12562813, PubMed:15775978). Probably senses the metabolic state of the cell via plastoquinone levels and informs the clock to modulate the photoperiod length (Probable) (PubMed:12562813, PubMed:15775978). Deletion decreases the ability of the bacteria to modulate the circadian period in response to altered light regimes (PubMed:12562813). Mild overexpression increases the photoperiod. Rapidly degraded in the presence of the quinone analog DBMIB (2,5-dibromo-3-methyl-6-isopropyl-p-benzoquinone), an artifical electron acceptor for photosystem II that reduces the plastoquinone pool. Partially resonsible for sensitivity of CikA to DBMIB, influences the levels of KaiA (PubMed:15775978).</text>
</comment>
<comment type="cofactor">
    <cofactor evidence="1">
        <name>[4Fe-4S] cluster</name>
        <dbReference type="ChEBI" id="CHEBI:49883"/>
    </cofactor>
    <text evidence="1 3 5">Binds 2 [4Fe-4S] clusters.</text>
</comment>
<comment type="subunit">
    <text evidence="3">Interacts with KaiA, CikA and SasA; the complexes do not follow circadian rhythms.</text>
</comment>
<comment type="interaction">
    <interactant intactId="EBI-626836">
        <id>Q8GLI4</id>
    </interactant>
    <interactant intactId="EBI-592281">
        <id>Q79PF6</id>
        <label>kaiA</label>
    </interactant>
    <organismsDiffer>false</organismsDiffer>
    <experiments>2</experiments>
</comment>
<comment type="disruption phenotype">
    <text evidence="2 3">Grows slightly more slowly than wild-type, decreased phycocyanin content, does not modify photoperiods in response to increasing light intensity, shortens the photoperiod by 1 hour (PubMed:12562813). 20% reduction in the level of CikA, CikA is slightly less sensitive to DBMIB, CikA levels do not decrease in high light as they do in wild-type. KaiA levels are higher than usual under all light regimes (PubMed:15775978).</text>
</comment>
<proteinExistence type="evidence at protein level"/>
<reference evidence="7" key="1">
    <citation type="journal article" date="2003" name="J. Bacteriol.">
        <title>ldpA encodes an iron-sulfur protein involved in light-dependent modulation of the circadian period in the cyanobacterium Synechococcus elongatus PCC 7942.</title>
        <authorList>
            <person name="Katayama M."/>
            <person name="Kondo T."/>
            <person name="Xiong J."/>
            <person name="Golden S.S."/>
        </authorList>
    </citation>
    <scope>NUCLEOTIDE SEQUENCE [GENOMIC DNA]</scope>
    <scope>FUNCTION</scope>
    <scope>COFACTOR</scope>
    <scope>DISRUPTION PHENOTYPE</scope>
    <source>
        <strain>ATCC 33912 / PCC 7942 / FACHB-805</strain>
    </source>
</reference>
<reference evidence="8" key="2">
    <citation type="submission" date="2005-08" db="EMBL/GenBank/DDBJ databases">
        <title>Complete sequence of chromosome 1 of Synechococcus elongatus PCC 7942.</title>
        <authorList>
            <consortium name="US DOE Joint Genome Institute"/>
            <person name="Copeland A."/>
            <person name="Lucas S."/>
            <person name="Lapidus A."/>
            <person name="Barry K."/>
            <person name="Detter J.C."/>
            <person name="Glavina T."/>
            <person name="Hammon N."/>
            <person name="Israni S."/>
            <person name="Pitluck S."/>
            <person name="Schmutz J."/>
            <person name="Larimer F."/>
            <person name="Land M."/>
            <person name="Kyrpides N."/>
            <person name="Lykidis A."/>
            <person name="Golden S."/>
            <person name="Richardson P."/>
        </authorList>
    </citation>
    <scope>NUCLEOTIDE SEQUENCE [LARGE SCALE GENOMIC DNA]</scope>
    <source>
        <strain>ATCC 33912 / PCC 7942 / FACHB-805</strain>
    </source>
</reference>
<reference key="3">
    <citation type="journal article" date="2005" name="EMBO J.">
        <title>LdpA: a component of the circadian clock senses redox state of the cell.</title>
        <authorList>
            <person name="Ivleva N.B."/>
            <person name="Bramlett M.R."/>
            <person name="Lindahl P.A."/>
            <person name="Golden S.S."/>
        </authorList>
    </citation>
    <scope>FUNCTION</scope>
    <scope>REDOX-SENSING</scope>
    <scope>COFACTOR</scope>
    <scope>INTERACTION WITH CIKA; KAIA AND SASA</scope>
    <scope>SUBUNIT</scope>
    <scope>DISRUPTION PHENOTYPE</scope>
    <source>
        <strain>ATCC 33912 / PCC 7942 / FACHB-805</strain>
    </source>
</reference>